<feature type="chain" id="PRO_0000429280" description="MATH domain and coiled-coil domain-containing protein At2g01790">
    <location>
        <begin position="1"/>
        <end position="269"/>
    </location>
</feature>
<feature type="domain" description="MATH" evidence="2">
    <location>
        <begin position="6"/>
        <end position="134"/>
    </location>
</feature>
<feature type="coiled-coil region" evidence="1">
    <location>
        <begin position="228"/>
        <end position="269"/>
    </location>
</feature>
<organism>
    <name type="scientific">Arabidopsis thaliana</name>
    <name type="common">Mouse-ear cress</name>
    <dbReference type="NCBI Taxonomy" id="3702"/>
    <lineage>
        <taxon>Eukaryota</taxon>
        <taxon>Viridiplantae</taxon>
        <taxon>Streptophyta</taxon>
        <taxon>Embryophyta</taxon>
        <taxon>Tracheophyta</taxon>
        <taxon>Spermatophyta</taxon>
        <taxon>Magnoliopsida</taxon>
        <taxon>eudicotyledons</taxon>
        <taxon>Gunneridae</taxon>
        <taxon>Pentapetalae</taxon>
        <taxon>rosids</taxon>
        <taxon>malvids</taxon>
        <taxon>Brassicales</taxon>
        <taxon>Brassicaceae</taxon>
        <taxon>Camelineae</taxon>
        <taxon>Arabidopsis</taxon>
    </lineage>
</organism>
<sequence length="269" mass="30515">MGNHQAVKKLWVINNFSFLDSDRVYSDIFVVGGCKWCLLALPEGNNNYIYDYFSLYLCVPDSEYLPSGWRRRAKVSFTMVNQVTGELSQQQEGVYWFDEKNTTQGFGSMFRLLVFQSSYKGFLVNGEVDIVAEVDVVEVIGKLDVSEESESIDSNGFDVLASQVESVNSLFGKYPCFASKLCPKTPRLKKNVVQSLNEILCKSTKELSNGDLAEAYSALRFVTKAGFKLDWLEKKLKETGKSRLQEIEEDLKDLKVKCADMDALLEFLR</sequence>
<reference key="1">
    <citation type="journal article" date="1999" name="Nature">
        <title>Sequence and analysis of chromosome 2 of the plant Arabidopsis thaliana.</title>
        <authorList>
            <person name="Lin X."/>
            <person name="Kaul S."/>
            <person name="Rounsley S.D."/>
            <person name="Shea T.P."/>
            <person name="Benito M.-I."/>
            <person name="Town C.D."/>
            <person name="Fujii C.Y."/>
            <person name="Mason T.M."/>
            <person name="Bowman C.L."/>
            <person name="Barnstead M.E."/>
            <person name="Feldblyum T.V."/>
            <person name="Buell C.R."/>
            <person name="Ketchum K.A."/>
            <person name="Lee J.J."/>
            <person name="Ronning C.M."/>
            <person name="Koo H.L."/>
            <person name="Moffat K.S."/>
            <person name="Cronin L.A."/>
            <person name="Shen M."/>
            <person name="Pai G."/>
            <person name="Van Aken S."/>
            <person name="Umayam L."/>
            <person name="Tallon L.J."/>
            <person name="Gill J.E."/>
            <person name="Adams M.D."/>
            <person name="Carrera A.J."/>
            <person name="Creasy T.H."/>
            <person name="Goodman H.M."/>
            <person name="Somerville C.R."/>
            <person name="Copenhaver G.P."/>
            <person name="Preuss D."/>
            <person name="Nierman W.C."/>
            <person name="White O."/>
            <person name="Eisen J.A."/>
            <person name="Salzberg S.L."/>
            <person name="Fraser C.M."/>
            <person name="Venter J.C."/>
        </authorList>
    </citation>
    <scope>NUCLEOTIDE SEQUENCE [LARGE SCALE GENOMIC DNA]</scope>
    <source>
        <strain>cv. Columbia</strain>
    </source>
</reference>
<reference key="2">
    <citation type="journal article" date="2017" name="Plant J.">
        <title>Araport11: a complete reannotation of the Arabidopsis thaliana reference genome.</title>
        <authorList>
            <person name="Cheng C.Y."/>
            <person name="Krishnakumar V."/>
            <person name="Chan A.P."/>
            <person name="Thibaud-Nissen F."/>
            <person name="Schobel S."/>
            <person name="Town C.D."/>
        </authorList>
    </citation>
    <scope>GENOME REANNOTATION</scope>
    <source>
        <strain>cv. Columbia</strain>
    </source>
</reference>
<reference key="3">
    <citation type="journal article" date="2010" name="Plant Physiol.">
        <title>RTM3, which controls long-distance movement of potyviruses, is a member of a new plant gene family encoding a meprin and TRAF homology domain-containing protein.</title>
        <authorList>
            <person name="Cosson P."/>
            <person name="Sofer L."/>
            <person name="Le Q.H."/>
            <person name="Leger V."/>
            <person name="Schurdi-Levraud V."/>
            <person name="Whitham S.A."/>
            <person name="Yamamoto M.L."/>
            <person name="Gopalan S."/>
            <person name="Le Gall O."/>
            <person name="Candresse T."/>
            <person name="Carrington J.C."/>
            <person name="Revers F."/>
        </authorList>
    </citation>
    <scope>GENE FAMILY</scope>
</reference>
<name>MCC03_ARATH</name>
<protein>
    <recommendedName>
        <fullName>MATH domain and coiled-coil domain-containing protein At2g01790</fullName>
    </recommendedName>
    <alternativeName>
        <fullName>RTM3-like protein At2g01790</fullName>
    </alternativeName>
</protein>
<proteinExistence type="predicted"/>
<gene>
    <name type="ordered locus">At2g01790</name>
    <name type="ORF">T8O11.4</name>
</gene>
<dbReference type="EMBL" id="AC006069">
    <property type="protein sequence ID" value="AAD12693.1"/>
    <property type="molecule type" value="Genomic_DNA"/>
</dbReference>
<dbReference type="EMBL" id="CP002685">
    <property type="protein sequence ID" value="AEC05498.1"/>
    <property type="molecule type" value="Genomic_DNA"/>
</dbReference>
<dbReference type="PIR" id="B84429">
    <property type="entry name" value="B84429"/>
</dbReference>
<dbReference type="RefSeq" id="NP_178288.1">
    <property type="nucleotide sequence ID" value="NM_126240.1"/>
</dbReference>
<dbReference type="SMR" id="Q9ZUA7"/>
<dbReference type="FunCoup" id="Q9ZUA7">
    <property type="interactions" value="40"/>
</dbReference>
<dbReference type="PaxDb" id="3702-AT2G01790.1"/>
<dbReference type="ProteomicsDB" id="238687"/>
<dbReference type="EnsemblPlants" id="AT2G01790.1">
    <property type="protein sequence ID" value="AT2G01790.1"/>
    <property type="gene ID" value="AT2G01790"/>
</dbReference>
<dbReference type="GeneID" id="814710"/>
<dbReference type="Gramene" id="AT2G01790.1">
    <property type="protein sequence ID" value="AT2G01790.1"/>
    <property type="gene ID" value="AT2G01790"/>
</dbReference>
<dbReference type="KEGG" id="ath:AT2G01790"/>
<dbReference type="Araport" id="AT2G01790"/>
<dbReference type="TAIR" id="AT2G01790"/>
<dbReference type="eggNOG" id="KOG1987">
    <property type="taxonomic scope" value="Eukaryota"/>
</dbReference>
<dbReference type="HOGENOM" id="CLU_026537_0_0_1"/>
<dbReference type="InParanoid" id="Q9ZUA7"/>
<dbReference type="OMA" id="ACEIRIQ"/>
<dbReference type="PhylomeDB" id="Q9ZUA7"/>
<dbReference type="PRO" id="PR:Q9ZUA7"/>
<dbReference type="Proteomes" id="UP000006548">
    <property type="component" value="Chromosome 2"/>
</dbReference>
<dbReference type="ExpressionAtlas" id="Q9ZUA7">
    <property type="expression patterns" value="baseline and differential"/>
</dbReference>
<dbReference type="CDD" id="cd00121">
    <property type="entry name" value="MATH"/>
    <property type="match status" value="1"/>
</dbReference>
<dbReference type="Gene3D" id="2.60.210.10">
    <property type="entry name" value="Apoptosis, Tumor Necrosis Factor Receptor Associated Protein 2, Chain A"/>
    <property type="match status" value="1"/>
</dbReference>
<dbReference type="InterPro" id="IPR050804">
    <property type="entry name" value="MATH-CC_domain_protein"/>
</dbReference>
<dbReference type="InterPro" id="IPR002083">
    <property type="entry name" value="MATH/TRAF_dom"/>
</dbReference>
<dbReference type="InterPro" id="IPR008974">
    <property type="entry name" value="TRAF-like"/>
</dbReference>
<dbReference type="PANTHER" id="PTHR46236:SF21">
    <property type="entry name" value="TRAF-LIKE FAMILY PROTEIN-RELATED"/>
    <property type="match status" value="1"/>
</dbReference>
<dbReference type="PANTHER" id="PTHR46236">
    <property type="entry name" value="TRAF-LIKE SUPERFAMILY PROTEIN"/>
    <property type="match status" value="1"/>
</dbReference>
<dbReference type="Pfam" id="PF22486">
    <property type="entry name" value="MATH_2"/>
    <property type="match status" value="1"/>
</dbReference>
<dbReference type="SMART" id="SM00061">
    <property type="entry name" value="MATH"/>
    <property type="match status" value="1"/>
</dbReference>
<dbReference type="SUPFAM" id="SSF49599">
    <property type="entry name" value="TRAF domain-like"/>
    <property type="match status" value="1"/>
</dbReference>
<dbReference type="PROSITE" id="PS50144">
    <property type="entry name" value="MATH"/>
    <property type="match status" value="1"/>
</dbReference>
<evidence type="ECO:0000255" key="1"/>
<evidence type="ECO:0000255" key="2">
    <source>
        <dbReference type="PROSITE-ProRule" id="PRU00129"/>
    </source>
</evidence>
<keyword id="KW-0175">Coiled coil</keyword>
<keyword id="KW-1185">Reference proteome</keyword>
<accession>Q9ZUA7</accession>